<dbReference type="EC" id="2.7.11.32" evidence="4"/>
<dbReference type="EC" id="2.7.4.27" evidence="4"/>
<dbReference type="EMBL" id="AL021960">
    <property type="protein sequence ID" value="CAA17540.1"/>
    <property type="molecule type" value="Genomic_DNA"/>
</dbReference>
<dbReference type="EMBL" id="AL161554">
    <property type="protein sequence ID" value="CAB79121.1"/>
    <property type="molecule type" value="Genomic_DNA"/>
</dbReference>
<dbReference type="EMBL" id="CP002687">
    <property type="protein sequence ID" value="AEE84423.1"/>
    <property type="molecule type" value="Genomic_DNA"/>
</dbReference>
<dbReference type="EMBL" id="CP002687">
    <property type="protein sequence ID" value="AEE84424.1"/>
    <property type="molecule type" value="Genomic_DNA"/>
</dbReference>
<dbReference type="EMBL" id="AK316730">
    <property type="protein sequence ID" value="BAH19455.1"/>
    <property type="molecule type" value="mRNA"/>
</dbReference>
<dbReference type="PIR" id="T04952">
    <property type="entry name" value="T04952"/>
</dbReference>
<dbReference type="RefSeq" id="NP_001031686.1">
    <molecule id="O49562-2"/>
    <property type="nucleotide sequence ID" value="NM_001036609.1"/>
</dbReference>
<dbReference type="RefSeq" id="NP_193853.1">
    <molecule id="O49562-1"/>
    <property type="nucleotide sequence ID" value="NM_118240.4"/>
</dbReference>
<dbReference type="SMR" id="O49562"/>
<dbReference type="FunCoup" id="O49562">
    <property type="interactions" value="776"/>
</dbReference>
<dbReference type="IntAct" id="O49562">
    <property type="interactions" value="1"/>
</dbReference>
<dbReference type="STRING" id="3702.O49562"/>
<dbReference type="PaxDb" id="3702-AT4G21210.1"/>
<dbReference type="ProteomicsDB" id="251349">
    <molecule id="O49562-1"/>
</dbReference>
<dbReference type="EnsemblPlants" id="AT4G21210.1">
    <molecule id="O49562-1"/>
    <property type="protein sequence ID" value="AT4G21210.1"/>
    <property type="gene ID" value="AT4G21210"/>
</dbReference>
<dbReference type="EnsemblPlants" id="AT4G21210.2">
    <molecule id="O49562-2"/>
    <property type="protein sequence ID" value="AT4G21210.2"/>
    <property type="gene ID" value="AT4G21210"/>
</dbReference>
<dbReference type="GeneID" id="827869"/>
<dbReference type="Gramene" id="AT4G21210.1">
    <molecule id="O49562-1"/>
    <property type="protein sequence ID" value="AT4G21210.1"/>
    <property type="gene ID" value="AT4G21210"/>
</dbReference>
<dbReference type="Gramene" id="AT4G21210.2">
    <molecule id="O49562-2"/>
    <property type="protein sequence ID" value="AT4G21210.2"/>
    <property type="gene ID" value="AT4G21210"/>
</dbReference>
<dbReference type="KEGG" id="ath:AT4G21210"/>
<dbReference type="Araport" id="AT4G21210"/>
<dbReference type="TAIR" id="AT4G21210">
    <property type="gene designation" value="RP1"/>
</dbReference>
<dbReference type="eggNOG" id="ENOG502SAAN">
    <property type="taxonomic scope" value="Eukaryota"/>
</dbReference>
<dbReference type="HOGENOM" id="CLU_046206_0_0_1"/>
<dbReference type="InParanoid" id="O49562"/>
<dbReference type="OMA" id="YAQCEFE"/>
<dbReference type="PhylomeDB" id="O49562"/>
<dbReference type="BRENDA" id="2.7.11.32">
    <property type="organism ID" value="399"/>
</dbReference>
<dbReference type="BRENDA" id="2.7.4.27">
    <property type="organism ID" value="399"/>
</dbReference>
<dbReference type="PRO" id="PR:O49562"/>
<dbReference type="Proteomes" id="UP000006548">
    <property type="component" value="Chromosome 4"/>
</dbReference>
<dbReference type="ExpressionAtlas" id="O49562">
    <property type="expression patterns" value="baseline and differential"/>
</dbReference>
<dbReference type="GO" id="GO:0009507">
    <property type="term" value="C:chloroplast"/>
    <property type="evidence" value="ECO:0000314"/>
    <property type="project" value="TAIR"/>
</dbReference>
<dbReference type="GO" id="GO:0009570">
    <property type="term" value="C:chloroplast stroma"/>
    <property type="evidence" value="ECO:0007669"/>
    <property type="project" value="UniProtKB-SubCell"/>
</dbReference>
<dbReference type="GO" id="GO:0005524">
    <property type="term" value="F:ATP binding"/>
    <property type="evidence" value="ECO:0007669"/>
    <property type="project" value="InterPro"/>
</dbReference>
<dbReference type="GO" id="GO:0004721">
    <property type="term" value="F:phosphoprotein phosphatase activity"/>
    <property type="evidence" value="ECO:0000314"/>
    <property type="project" value="TAIR"/>
</dbReference>
<dbReference type="GO" id="GO:0016776">
    <property type="term" value="F:phosphotransferase activity, phosphate group as acceptor"/>
    <property type="evidence" value="ECO:0007669"/>
    <property type="project" value="InterPro"/>
</dbReference>
<dbReference type="GO" id="GO:0004672">
    <property type="term" value="F:protein kinase activity"/>
    <property type="evidence" value="ECO:0000314"/>
    <property type="project" value="TAIR"/>
</dbReference>
<dbReference type="GO" id="GO:0004674">
    <property type="term" value="F:protein serine/threonine kinase activity"/>
    <property type="evidence" value="ECO:0007669"/>
    <property type="project" value="UniProtKB-KW"/>
</dbReference>
<dbReference type="HAMAP" id="MF_00921">
    <property type="entry name" value="PDRP"/>
    <property type="match status" value="1"/>
</dbReference>
<dbReference type="InterPro" id="IPR005177">
    <property type="entry name" value="Kinase-pyrophosphorylase"/>
</dbReference>
<dbReference type="InterPro" id="IPR026565">
    <property type="entry name" value="PPDK_reg"/>
</dbReference>
<dbReference type="InterPro" id="IPR017409">
    <property type="entry name" value="Pyrv_Pi_dikinase_reg_chlpt"/>
</dbReference>
<dbReference type="NCBIfam" id="NF003742">
    <property type="entry name" value="PRK05339.1"/>
    <property type="match status" value="1"/>
</dbReference>
<dbReference type="PANTHER" id="PTHR31756">
    <property type="entry name" value="PYRUVATE, PHOSPHATE DIKINASE REGULATORY PROTEIN 1, CHLOROPLASTIC"/>
    <property type="match status" value="1"/>
</dbReference>
<dbReference type="PANTHER" id="PTHR31756:SF3">
    <property type="entry name" value="PYRUVATE, PHOSPHATE DIKINASE REGULATORY PROTEIN 1, CHLOROPLASTIC"/>
    <property type="match status" value="1"/>
</dbReference>
<dbReference type="Pfam" id="PF03618">
    <property type="entry name" value="Kinase-PPPase"/>
    <property type="match status" value="1"/>
</dbReference>
<dbReference type="PIRSF" id="PIRSF038149">
    <property type="entry name" value="Pyruvate_Pi_dikinase_regulator"/>
    <property type="match status" value="1"/>
</dbReference>
<name>PDRP1_ARATH</name>
<comment type="function">
    <text evidence="3 4">Bifunctional serine/threonine kinase and phosphorylase involved in the dark/light-mediated regulation of PPDK by catalyzing its phosphorylation/dephosphorylation. Dark/light-induced changes in stromal concentrations of the competing ADP and Pi substrates govern the direction of the reaction. In the dark, phosphorylates the catalytic intermediate of PPDK (PPDK-HisP), inactivating it. Light exposure induces the phosphorolysis reaction that reactivates PPDK. Unlike the kinase function which can utilize either Thr or Ser as target, the phosphorylase function has a strict substrate requirement for threonyl phosphate.</text>
</comment>
<comment type="catalytic activity">
    <reaction evidence="4">
        <text>N(tele)-phospho-L-histidyl/L-threonyl-[pyruvate, phosphate dikinase] + ADP = N(tele)-phospho-L-histidyl/O-phospho-L-threonyl-[pyruvate, phosphate dikinase] + AMP + H(+)</text>
        <dbReference type="Rhea" id="RHEA:43692"/>
        <dbReference type="Rhea" id="RHEA-COMP:10650"/>
        <dbReference type="Rhea" id="RHEA-COMP:10651"/>
        <dbReference type="ChEBI" id="CHEBI:15378"/>
        <dbReference type="ChEBI" id="CHEBI:30013"/>
        <dbReference type="ChEBI" id="CHEBI:61977"/>
        <dbReference type="ChEBI" id="CHEBI:83586"/>
        <dbReference type="ChEBI" id="CHEBI:456215"/>
        <dbReference type="ChEBI" id="CHEBI:456216"/>
        <dbReference type="EC" id="2.7.11.32"/>
    </reaction>
</comment>
<comment type="catalytic activity">
    <reaction evidence="4">
        <text>N(tele)-phospho-L-histidyl/O-phospho-L-threonyl-[pyruvate, phosphate dikinase] + phosphate + H(+) = N(tele)-phospho-L-histidyl/L-threonyl-[pyruvate, phosphate dikinase] + diphosphate</text>
        <dbReference type="Rhea" id="RHEA:43696"/>
        <dbReference type="Rhea" id="RHEA-COMP:10650"/>
        <dbReference type="Rhea" id="RHEA-COMP:10651"/>
        <dbReference type="ChEBI" id="CHEBI:15378"/>
        <dbReference type="ChEBI" id="CHEBI:30013"/>
        <dbReference type="ChEBI" id="CHEBI:33019"/>
        <dbReference type="ChEBI" id="CHEBI:43474"/>
        <dbReference type="ChEBI" id="CHEBI:61977"/>
        <dbReference type="ChEBI" id="CHEBI:83586"/>
        <dbReference type="EC" id="2.7.4.27"/>
    </reaction>
</comment>
<comment type="activity regulation">
    <text>Regulated by light/dark exposure.</text>
</comment>
<comment type="subunit">
    <text evidence="4">Interacts with PPDK1.</text>
</comment>
<comment type="subcellular location">
    <subcellularLocation>
        <location evidence="3">Plastid</location>
        <location evidence="3">Chloroplast stroma</location>
    </subcellularLocation>
</comment>
<comment type="alternative products">
    <event type="alternative splicing"/>
    <isoform>
        <id>O49562-1</id>
        <name>1</name>
        <sequence type="displayed"/>
    </isoform>
    <isoform>
        <id>O49562-2</id>
        <name>2</name>
        <sequence type="described" ref="VSP_034504"/>
    </isoform>
</comment>
<comment type="tissue specificity">
    <text evidence="3">Expressed in green tissues.</text>
</comment>
<comment type="miscellaneous">
    <text>The initial 51 amino acids are sufficient to act as a chloroplast transit peptide and the removal of the next 35 amino acids reduces the strength of interaction with PPDK significantly, which suggested that these residues are important for binding RP1 and may not be part of the transit peptide (PubMed:21883547).</text>
</comment>
<comment type="similarity">
    <text evidence="5">Belongs to the pyruvate, phosphate/water dikinase regulatory protein family. PDRP subfamily.</text>
</comment>
<organism>
    <name type="scientific">Arabidopsis thaliana</name>
    <name type="common">Mouse-ear cress</name>
    <dbReference type="NCBI Taxonomy" id="3702"/>
    <lineage>
        <taxon>Eukaryota</taxon>
        <taxon>Viridiplantae</taxon>
        <taxon>Streptophyta</taxon>
        <taxon>Embryophyta</taxon>
        <taxon>Tracheophyta</taxon>
        <taxon>Spermatophyta</taxon>
        <taxon>Magnoliopsida</taxon>
        <taxon>eudicotyledons</taxon>
        <taxon>Gunneridae</taxon>
        <taxon>Pentapetalae</taxon>
        <taxon>rosids</taxon>
        <taxon>malvids</taxon>
        <taxon>Brassicales</taxon>
        <taxon>Brassicaceae</taxon>
        <taxon>Camelineae</taxon>
        <taxon>Arabidopsis</taxon>
    </lineage>
</organism>
<evidence type="ECO:0000255" key="1"/>
<evidence type="ECO:0000256" key="2">
    <source>
        <dbReference type="SAM" id="MobiDB-lite"/>
    </source>
</evidence>
<evidence type="ECO:0000269" key="3">
    <source>
    </source>
</evidence>
<evidence type="ECO:0000269" key="4">
    <source>
    </source>
</evidence>
<evidence type="ECO:0000305" key="5"/>
<reference key="1">
    <citation type="journal article" date="1999" name="Nature">
        <title>Sequence and analysis of chromosome 4 of the plant Arabidopsis thaliana.</title>
        <authorList>
            <person name="Mayer K.F.X."/>
            <person name="Schueller C."/>
            <person name="Wambutt R."/>
            <person name="Murphy G."/>
            <person name="Volckaert G."/>
            <person name="Pohl T."/>
            <person name="Duesterhoeft A."/>
            <person name="Stiekema W."/>
            <person name="Entian K.-D."/>
            <person name="Terryn N."/>
            <person name="Harris B."/>
            <person name="Ansorge W."/>
            <person name="Brandt P."/>
            <person name="Grivell L.A."/>
            <person name="Rieger M."/>
            <person name="Weichselgartner M."/>
            <person name="de Simone V."/>
            <person name="Obermaier B."/>
            <person name="Mache R."/>
            <person name="Mueller M."/>
            <person name="Kreis M."/>
            <person name="Delseny M."/>
            <person name="Puigdomenech P."/>
            <person name="Watson M."/>
            <person name="Schmidtheini T."/>
            <person name="Reichert B."/>
            <person name="Portetelle D."/>
            <person name="Perez-Alonso M."/>
            <person name="Boutry M."/>
            <person name="Bancroft I."/>
            <person name="Vos P."/>
            <person name="Hoheisel J."/>
            <person name="Zimmermann W."/>
            <person name="Wedler H."/>
            <person name="Ridley P."/>
            <person name="Langham S.-A."/>
            <person name="McCullagh B."/>
            <person name="Bilham L."/>
            <person name="Robben J."/>
            <person name="van der Schueren J."/>
            <person name="Grymonprez B."/>
            <person name="Chuang Y.-J."/>
            <person name="Vandenbussche F."/>
            <person name="Braeken M."/>
            <person name="Weltjens I."/>
            <person name="Voet M."/>
            <person name="Bastiaens I."/>
            <person name="Aert R."/>
            <person name="Defoor E."/>
            <person name="Weitzenegger T."/>
            <person name="Bothe G."/>
            <person name="Ramsperger U."/>
            <person name="Hilbert H."/>
            <person name="Braun M."/>
            <person name="Holzer E."/>
            <person name="Brandt A."/>
            <person name="Peters S."/>
            <person name="van Staveren M."/>
            <person name="Dirkse W."/>
            <person name="Mooijman P."/>
            <person name="Klein Lankhorst R."/>
            <person name="Rose M."/>
            <person name="Hauf J."/>
            <person name="Koetter P."/>
            <person name="Berneiser S."/>
            <person name="Hempel S."/>
            <person name="Feldpausch M."/>
            <person name="Lamberth S."/>
            <person name="Van den Daele H."/>
            <person name="De Keyser A."/>
            <person name="Buysshaert C."/>
            <person name="Gielen J."/>
            <person name="Villarroel R."/>
            <person name="De Clercq R."/>
            <person name="van Montagu M."/>
            <person name="Rogers J."/>
            <person name="Cronin A."/>
            <person name="Quail M.A."/>
            <person name="Bray-Allen S."/>
            <person name="Clark L."/>
            <person name="Doggett J."/>
            <person name="Hall S."/>
            <person name="Kay M."/>
            <person name="Lennard N."/>
            <person name="McLay K."/>
            <person name="Mayes R."/>
            <person name="Pettett A."/>
            <person name="Rajandream M.A."/>
            <person name="Lyne M."/>
            <person name="Benes V."/>
            <person name="Rechmann S."/>
            <person name="Borkova D."/>
            <person name="Bloecker H."/>
            <person name="Scharfe M."/>
            <person name="Grimm M."/>
            <person name="Loehnert T.-H."/>
            <person name="Dose S."/>
            <person name="de Haan M."/>
            <person name="Maarse A.C."/>
            <person name="Schaefer M."/>
            <person name="Mueller-Auer S."/>
            <person name="Gabel C."/>
            <person name="Fuchs M."/>
            <person name="Fartmann B."/>
            <person name="Granderath K."/>
            <person name="Dauner D."/>
            <person name="Herzl A."/>
            <person name="Neumann S."/>
            <person name="Argiriou A."/>
            <person name="Vitale D."/>
            <person name="Liguori R."/>
            <person name="Piravandi E."/>
            <person name="Massenet O."/>
            <person name="Quigley F."/>
            <person name="Clabauld G."/>
            <person name="Muendlein A."/>
            <person name="Felber R."/>
            <person name="Schnabl S."/>
            <person name="Hiller R."/>
            <person name="Schmidt W."/>
            <person name="Lecharny A."/>
            <person name="Aubourg S."/>
            <person name="Chefdor F."/>
            <person name="Cooke R."/>
            <person name="Berger C."/>
            <person name="Monfort A."/>
            <person name="Casacuberta E."/>
            <person name="Gibbons T."/>
            <person name="Weber N."/>
            <person name="Vandenbol M."/>
            <person name="Bargues M."/>
            <person name="Terol J."/>
            <person name="Torres A."/>
            <person name="Perez-Perez A."/>
            <person name="Purnelle B."/>
            <person name="Bent E."/>
            <person name="Johnson S."/>
            <person name="Tacon D."/>
            <person name="Jesse T."/>
            <person name="Heijnen L."/>
            <person name="Schwarz S."/>
            <person name="Scholler P."/>
            <person name="Heber S."/>
            <person name="Francs P."/>
            <person name="Bielke C."/>
            <person name="Frishman D."/>
            <person name="Haase D."/>
            <person name="Lemcke K."/>
            <person name="Mewes H.-W."/>
            <person name="Stocker S."/>
            <person name="Zaccaria P."/>
            <person name="Bevan M."/>
            <person name="Wilson R.K."/>
            <person name="de la Bastide M."/>
            <person name="Habermann K."/>
            <person name="Parnell L."/>
            <person name="Dedhia N."/>
            <person name="Gnoj L."/>
            <person name="Schutz K."/>
            <person name="Huang E."/>
            <person name="Spiegel L."/>
            <person name="Sekhon M."/>
            <person name="Murray J."/>
            <person name="Sheet P."/>
            <person name="Cordes M."/>
            <person name="Abu-Threideh J."/>
            <person name="Stoneking T."/>
            <person name="Kalicki J."/>
            <person name="Graves T."/>
            <person name="Harmon G."/>
            <person name="Edwards J."/>
            <person name="Latreille P."/>
            <person name="Courtney L."/>
            <person name="Cloud J."/>
            <person name="Abbott A."/>
            <person name="Scott K."/>
            <person name="Johnson D."/>
            <person name="Minx P."/>
            <person name="Bentley D."/>
            <person name="Fulton B."/>
            <person name="Miller N."/>
            <person name="Greco T."/>
            <person name="Kemp K."/>
            <person name="Kramer J."/>
            <person name="Fulton L."/>
            <person name="Mardis E."/>
            <person name="Dante M."/>
            <person name="Pepin K."/>
            <person name="Hillier L.W."/>
            <person name="Nelson J."/>
            <person name="Spieth J."/>
            <person name="Ryan E."/>
            <person name="Andrews S."/>
            <person name="Geisel C."/>
            <person name="Layman D."/>
            <person name="Du H."/>
            <person name="Ali J."/>
            <person name="Berghoff A."/>
            <person name="Jones K."/>
            <person name="Drone K."/>
            <person name="Cotton M."/>
            <person name="Joshu C."/>
            <person name="Antonoiu B."/>
            <person name="Zidanic M."/>
            <person name="Strong C."/>
            <person name="Sun H."/>
            <person name="Lamar B."/>
            <person name="Yordan C."/>
            <person name="Ma P."/>
            <person name="Zhong J."/>
            <person name="Preston R."/>
            <person name="Vil D."/>
            <person name="Shekher M."/>
            <person name="Matero A."/>
            <person name="Shah R."/>
            <person name="Swaby I.K."/>
            <person name="O'Shaughnessy A."/>
            <person name="Rodriguez M."/>
            <person name="Hoffman J."/>
            <person name="Till S."/>
            <person name="Granat S."/>
            <person name="Shohdy N."/>
            <person name="Hasegawa A."/>
            <person name="Hameed A."/>
            <person name="Lodhi M."/>
            <person name="Johnson A."/>
            <person name="Chen E."/>
            <person name="Marra M.A."/>
            <person name="Martienssen R."/>
            <person name="McCombie W.R."/>
        </authorList>
    </citation>
    <scope>NUCLEOTIDE SEQUENCE [LARGE SCALE GENOMIC DNA]</scope>
    <source>
        <strain>cv. Columbia</strain>
    </source>
</reference>
<reference key="2">
    <citation type="journal article" date="2017" name="Plant J.">
        <title>Araport11: a complete reannotation of the Arabidopsis thaliana reference genome.</title>
        <authorList>
            <person name="Cheng C.Y."/>
            <person name="Krishnakumar V."/>
            <person name="Chan A.P."/>
            <person name="Thibaud-Nissen F."/>
            <person name="Schobel S."/>
            <person name="Town C.D."/>
        </authorList>
    </citation>
    <scope>GENOME REANNOTATION</scope>
    <source>
        <strain>cv. Columbia</strain>
    </source>
</reference>
<reference key="3">
    <citation type="journal article" date="2009" name="DNA Res.">
        <title>Analysis of multiple occurrences of alternative splicing events in Arabidopsis thaliana using novel sequenced full-length cDNAs.</title>
        <authorList>
            <person name="Iida K."/>
            <person name="Fukami-Kobayashi K."/>
            <person name="Toyoda A."/>
            <person name="Sakaki Y."/>
            <person name="Kobayashi M."/>
            <person name="Seki M."/>
            <person name="Shinozaki K."/>
        </authorList>
    </citation>
    <scope>NUCLEOTIDE SEQUENCE [LARGE SCALE MRNA]</scope>
    <source>
        <strain>cv. Columbia</strain>
    </source>
</reference>
<reference key="4">
    <citation type="journal article" date="2008" name="Plant J.">
        <title>The pyruvate, orthophosphate dikinase regulatory proteins of Arabidopsis possess a novel, unprecedented Ser/Thr protein kinase primary structure.</title>
        <authorList>
            <person name="Chastain C.J."/>
            <person name="Xu W."/>
            <person name="Parsley K."/>
            <person name="Sarath G."/>
            <person name="Hibberd J.M."/>
            <person name="Chollet R."/>
        </authorList>
    </citation>
    <scope>FUNCTION</scope>
    <scope>SUBCELLULAR LOCATION</scope>
    <scope>TISSUE SPECIFICITY</scope>
</reference>
<reference key="5">
    <citation type="journal article" date="2011" name="Plant J.">
        <title>The pyruvate, orthophosphate dikinase regulatory proteins of Arabidopsis are both bifunctional and interact with the catalytic and nucleotide-binding domains of pyruvate, orthophosphate dikinase.</title>
        <authorList>
            <person name="Astley H.M."/>
            <person name="Parsley K."/>
            <person name="Aubry S."/>
            <person name="Chastain C.J."/>
            <person name="Burnell J.N."/>
            <person name="Webb M.E."/>
            <person name="Hibberd J.M."/>
        </authorList>
    </citation>
    <scope>FUNCTION</scope>
    <scope>CATALYTIC ACTIVITY</scope>
    <scope>INTERACTION WITH PPDK1</scope>
    <scope>MUTAGENESIS OF SER-122; ASP-123; TYR-238; ASP-252; GLY-269; SER-271; ARG-272; LYS-275; PRO-277; SER-279; ALA-283; ASN-291; PRO-293; ARG-326; ARG-329; TYR-343; GLU-352; GLU-377; GLU-378; THR-379 AND ALA-380</scope>
</reference>
<sequence>MALLSAMKLQGRPPPISSNLNPNSKPAGSDSVSLNASEPGSERKPRKFSSQLNRWNRARTLRSGAKLDSTITNGSNNTTGPMRPIESSSRTDVSTLDSDVSSSSNGVSEADMTAAKSIYIVSDGTGWTAEHAVNAALGQFDYCLVDRGCPVNTHLFSGIEDGEKLMEIIKQAAREGAMVIYTLADPSMAEATMRACKLWKIPSLDILGPITESISSHLGTNPSGLSRGITNSSLNEDYFKRIEAIEFTIKHDDGALPENLEKADIVLVGVSRTGKTPLSTYLAQKGYKVSNVPIVNGVDLPKTLFEIDPRKVFGLMINPLVLQGIREARAKSLGLGSSFKTKYSELGSVKEELELAKKIFAENPTWPVIEVTESAIEETAAVVLRLYDERQSNRAMPRISKSY</sequence>
<proteinExistence type="evidence at protein level"/>
<gene>
    <name type="primary">RP1</name>
    <name type="ordered locus">At4g21210</name>
    <name type="ORF">F7J7.150</name>
</gene>
<protein>
    <recommendedName>
        <fullName>Pyruvate, phosphate dikinase regulatory protein 1, chloroplastic</fullName>
        <ecNumber evidence="4">2.7.11.32</ecNumber>
        <ecNumber evidence="4">2.7.4.27</ecNumber>
    </recommendedName>
    <alternativeName>
        <fullName>Bifunctional dikinase regulatory protein 1</fullName>
        <shortName>AtRP1</shortName>
        <shortName>BFRP1</shortName>
    </alternativeName>
    <alternativeName>
        <fullName>Pyruvate, Pi dikinase regulatory protein 1</fullName>
        <shortName>PPDK RP1</shortName>
        <shortName>PPDK regulatory protein 1</shortName>
    </alternativeName>
</protein>
<keyword id="KW-0025">Alternative splicing</keyword>
<keyword id="KW-0150">Chloroplast</keyword>
<keyword id="KW-0418">Kinase</keyword>
<keyword id="KW-0547">Nucleotide-binding</keyword>
<keyword id="KW-0934">Plastid</keyword>
<keyword id="KW-1185">Reference proteome</keyword>
<keyword id="KW-0723">Serine/threonine-protein kinase</keyword>
<keyword id="KW-0808">Transferase</keyword>
<keyword id="KW-0809">Transit peptide</keyword>
<feature type="transit peptide" description="Chloroplast" evidence="1">
    <location>
        <begin position="1"/>
        <end position="86"/>
    </location>
</feature>
<feature type="chain" id="PRO_0000196751" description="Pyruvate, phosphate dikinase regulatory protein 1, chloroplastic">
    <location>
        <begin position="87"/>
        <end position="403"/>
    </location>
</feature>
<feature type="region of interest" description="Disordered" evidence="2">
    <location>
        <begin position="1"/>
        <end position="108"/>
    </location>
</feature>
<feature type="compositionally biased region" description="Low complexity" evidence="2">
    <location>
        <begin position="17"/>
        <end position="26"/>
    </location>
</feature>
<feature type="compositionally biased region" description="Low complexity" evidence="2">
    <location>
        <begin position="69"/>
        <end position="80"/>
    </location>
</feature>
<feature type="compositionally biased region" description="Low complexity" evidence="2">
    <location>
        <begin position="87"/>
        <end position="108"/>
    </location>
</feature>
<feature type="binding site" evidence="1">
    <location>
        <begin position="269"/>
        <end position="276"/>
    </location>
    <ligand>
        <name>ADP</name>
        <dbReference type="ChEBI" id="CHEBI:456216"/>
    </ligand>
</feature>
<feature type="splice variant" id="VSP_034504" description="In isoform 2." evidence="5">
    <location>
        <begin position="297"/>
        <end position="323"/>
    </location>
</feature>
<feature type="mutagenesis site" description="No effect on phosphotransferase and kinase activities." evidence="4">
    <original>S</original>
    <variation>A</variation>
    <location>
        <position position="122"/>
    </location>
</feature>
<feature type="mutagenesis site" description="No effect on phosphotransferase and kinase activities." evidence="4">
    <original>D</original>
    <variation>A</variation>
    <location>
        <position position="123"/>
    </location>
</feature>
<feature type="mutagenesis site" description="No effect on phosphotransferase and kinase activities." evidence="4">
    <original>Y</original>
    <variation>F</variation>
    <location>
        <position position="238"/>
    </location>
</feature>
<feature type="mutagenesis site" description="No effect on the interaction with PPDK, but loss of phosphotransferase activity and partially reduced kinase activity." evidence="4">
    <original>D</original>
    <variation>N</variation>
    <location>
        <position position="252"/>
    </location>
</feature>
<feature type="mutagenesis site" description="No effect on the interaction with PPDK, but loss of phosphotransferase and kinase activities." evidence="4">
    <original>G</original>
    <variation>A</variation>
    <location>
        <position position="269"/>
    </location>
</feature>
<feature type="mutagenesis site" description="No effect on the interaction with PPDK, but loss of phosphotransferase activity and partially reduced kinase activity." evidence="4">
    <original>S</original>
    <variation>A</variation>
    <location>
        <position position="271"/>
    </location>
</feature>
<feature type="mutagenesis site" description="Weak interaction with PPDK, and loss of phosphotransferase and kinase activities." evidence="4">
    <original>R</original>
    <variation>M</variation>
    <location>
        <position position="272"/>
    </location>
</feature>
<feature type="mutagenesis site" description="Weak interaction with PPDK, and loss of phosphotransferase and kinase activities." evidence="4">
    <original>K</original>
    <variation>M</variation>
    <location>
        <position position="275"/>
    </location>
</feature>
<feature type="mutagenesis site" description="Weak interaction with PPDK, and loss of phosphotransferase and kinase activities." evidence="4">
    <original>P</original>
    <variation>A</variation>
    <location>
        <position position="277"/>
    </location>
</feature>
<feature type="mutagenesis site" description="No effect on phosphotransferase and kinase activities." evidence="4">
    <original>S</original>
    <variation>A</variation>
    <location>
        <position position="279"/>
    </location>
</feature>
<feature type="mutagenesis site" description="No effect on the interaction with PPDK, but loss of phosphotransferase and kinase activities." evidence="4">
    <original>A</original>
    <variation>T</variation>
    <location>
        <position position="283"/>
    </location>
</feature>
<feature type="mutagenesis site" description="No effect on the interaction with PPDK, but loss of phosphotransferase and kinase activities." evidence="4">
    <original>N</original>
    <variation>A</variation>
    <location>
        <position position="291"/>
    </location>
</feature>
<feature type="mutagenesis site" description="No effect on the interaction with PPDK, but reduced phosphotransferase and kinase activities." evidence="4">
    <original>P</original>
    <variation>A</variation>
    <location>
        <position position="293"/>
    </location>
</feature>
<feature type="mutagenesis site" description="Weak interaction with PPDK, and loss of phosphotransferase and kinase activities." evidence="4">
    <original>R</original>
    <variation>M</variation>
    <location>
        <position position="326"/>
    </location>
</feature>
<feature type="mutagenesis site" description="No effect on the interaction with PPDK, but loss of phosphotransferase and kinase activities." evidence="4">
    <original>R</original>
    <variation>M</variation>
    <location>
        <position position="329"/>
    </location>
</feature>
<feature type="mutagenesis site" description="Weak effect on the interaction with PPDK, but loss of phosphotransferase and kinase activities." evidence="4">
    <original>Y</original>
    <variation>F</variation>
    <location>
        <position position="343"/>
    </location>
</feature>
<feature type="mutagenesis site" description="Weak interaction with PPDK, and loss of phosphotransferase and kinase activities." evidence="4">
    <original>E</original>
    <variation>Q</variation>
    <location>
        <position position="352"/>
    </location>
</feature>
<feature type="mutagenesis site" description="Weak interaction with PPDK, and loss of phosphotransferase and kinase activities." evidence="4">
    <original>E</original>
    <variation>Q</variation>
    <location>
        <position position="377"/>
    </location>
</feature>
<feature type="mutagenesis site" description="No effect on phosphotransferase and kinase activities." evidence="4">
    <original>E</original>
    <variation>Q</variation>
    <location>
        <position position="378"/>
    </location>
</feature>
<feature type="mutagenesis site" description="No effect on phosphotransferase and kinase activities." evidence="4">
    <original>T</original>
    <variation>V</variation>
    <location>
        <position position="379"/>
    </location>
</feature>
<feature type="mutagenesis site" description="No effect on the interaction with PPDK, but loss of phosphotransferase and kinase activities." evidence="4">
    <original>A</original>
    <variation>T</variation>
    <location>
        <position position="380"/>
    </location>
</feature>
<accession>O49562</accession>
<accession>B9DFD8</accession>
<accession>Q2V3G6</accession>